<reference key="1">
    <citation type="journal article" date="1998" name="Nature">
        <title>Deciphering the biology of Mycobacterium tuberculosis from the complete genome sequence.</title>
        <authorList>
            <person name="Cole S.T."/>
            <person name="Brosch R."/>
            <person name="Parkhill J."/>
            <person name="Garnier T."/>
            <person name="Churcher C.M."/>
            <person name="Harris D.E."/>
            <person name="Gordon S.V."/>
            <person name="Eiglmeier K."/>
            <person name="Gas S."/>
            <person name="Barry C.E. III"/>
            <person name="Tekaia F."/>
            <person name="Badcock K."/>
            <person name="Basham D."/>
            <person name="Brown D."/>
            <person name="Chillingworth T."/>
            <person name="Connor R."/>
            <person name="Davies R.M."/>
            <person name="Devlin K."/>
            <person name="Feltwell T."/>
            <person name="Gentles S."/>
            <person name="Hamlin N."/>
            <person name="Holroyd S."/>
            <person name="Hornsby T."/>
            <person name="Jagels K."/>
            <person name="Krogh A."/>
            <person name="McLean J."/>
            <person name="Moule S."/>
            <person name="Murphy L.D."/>
            <person name="Oliver S."/>
            <person name="Osborne J."/>
            <person name="Quail M.A."/>
            <person name="Rajandream M.A."/>
            <person name="Rogers J."/>
            <person name="Rutter S."/>
            <person name="Seeger K."/>
            <person name="Skelton S."/>
            <person name="Squares S."/>
            <person name="Squares R."/>
            <person name="Sulston J.E."/>
            <person name="Taylor K."/>
            <person name="Whitehead S."/>
            <person name="Barrell B.G."/>
        </authorList>
    </citation>
    <scope>NUCLEOTIDE SEQUENCE [LARGE SCALE GENOMIC DNA]</scope>
    <source>
        <strain>ATCC 25618 / H37Rv</strain>
    </source>
</reference>
<reference key="2">
    <citation type="journal article" date="2011" name="Mol. Cell. Proteomics">
        <title>Proteogenomic analysis of Mycobacterium tuberculosis by high resolution mass spectrometry.</title>
        <authorList>
            <person name="Kelkar D.S."/>
            <person name="Kumar D."/>
            <person name="Kumar P."/>
            <person name="Balakrishnan L."/>
            <person name="Muthusamy B."/>
            <person name="Yadav A.K."/>
            <person name="Shrivastava P."/>
            <person name="Marimuthu A."/>
            <person name="Anand S."/>
            <person name="Sundaram H."/>
            <person name="Kingsbury R."/>
            <person name="Harsha H.C."/>
            <person name="Nair B."/>
            <person name="Prasad T.S."/>
            <person name="Chauhan D.S."/>
            <person name="Katoch K."/>
            <person name="Katoch V.M."/>
            <person name="Kumar P."/>
            <person name="Chaerkady R."/>
            <person name="Ramachandran S."/>
            <person name="Dash D."/>
            <person name="Pandey A."/>
        </authorList>
    </citation>
    <scope>IDENTIFICATION BY MASS SPECTROMETRY [LARGE SCALE ANALYSIS]</scope>
    <source>
        <strain>ATCC 25618 / H37Rv</strain>
    </source>
</reference>
<name>SUCC_MYCTU</name>
<feature type="chain" id="PRO_0000102840" description="Succinate--CoA ligase [ADP-forming] subunit beta">
    <location>
        <begin position="1"/>
        <end position="387"/>
    </location>
</feature>
<feature type="domain" description="ATP-grasp" evidence="1">
    <location>
        <begin position="9"/>
        <end position="236"/>
    </location>
</feature>
<feature type="binding site" evidence="1">
    <location>
        <position position="45"/>
    </location>
    <ligand>
        <name>ATP</name>
        <dbReference type="ChEBI" id="CHEBI:30616"/>
    </ligand>
</feature>
<feature type="binding site" evidence="1">
    <location>
        <begin position="52"/>
        <end position="54"/>
    </location>
    <ligand>
        <name>ATP</name>
        <dbReference type="ChEBI" id="CHEBI:30616"/>
    </ligand>
</feature>
<feature type="binding site" evidence="1">
    <location>
        <position position="94"/>
    </location>
    <ligand>
        <name>ATP</name>
        <dbReference type="ChEBI" id="CHEBI:30616"/>
    </ligand>
</feature>
<feature type="binding site" evidence="1">
    <location>
        <position position="99"/>
    </location>
    <ligand>
        <name>ATP</name>
        <dbReference type="ChEBI" id="CHEBI:30616"/>
    </ligand>
</feature>
<feature type="binding site" evidence="1">
    <location>
        <position position="191"/>
    </location>
    <ligand>
        <name>Mg(2+)</name>
        <dbReference type="ChEBI" id="CHEBI:18420"/>
    </ligand>
</feature>
<feature type="binding site" evidence="1">
    <location>
        <position position="205"/>
    </location>
    <ligand>
        <name>Mg(2+)</name>
        <dbReference type="ChEBI" id="CHEBI:18420"/>
    </ligand>
</feature>
<feature type="binding site" evidence="1">
    <location>
        <position position="256"/>
    </location>
    <ligand>
        <name>substrate</name>
        <note>ligand shared with subunit alpha</note>
    </ligand>
</feature>
<feature type="binding site" evidence="1">
    <location>
        <begin position="318"/>
        <end position="320"/>
    </location>
    <ligand>
        <name>substrate</name>
        <note>ligand shared with subunit alpha</note>
    </ligand>
</feature>
<dbReference type="EC" id="6.2.1.5" evidence="1"/>
<dbReference type="EMBL" id="AL123456">
    <property type="protein sequence ID" value="CCP43699.1"/>
    <property type="molecule type" value="Genomic_DNA"/>
</dbReference>
<dbReference type="PIR" id="E70716">
    <property type="entry name" value="E70716"/>
</dbReference>
<dbReference type="RefSeq" id="NP_215466.1">
    <property type="nucleotide sequence ID" value="NC_000962.3"/>
</dbReference>
<dbReference type="RefSeq" id="WP_003898659.1">
    <property type="nucleotide sequence ID" value="NZ_NVQJ01000001.1"/>
</dbReference>
<dbReference type="SMR" id="P9WGC5"/>
<dbReference type="FunCoup" id="P9WGC5">
    <property type="interactions" value="569"/>
</dbReference>
<dbReference type="STRING" id="83332.Rv0951"/>
<dbReference type="PaxDb" id="83332-Rv0951"/>
<dbReference type="DNASU" id="885434"/>
<dbReference type="GeneID" id="45424920"/>
<dbReference type="GeneID" id="885434"/>
<dbReference type="KEGG" id="mtu:Rv0951"/>
<dbReference type="KEGG" id="mtv:RVBD_0951"/>
<dbReference type="TubercuList" id="Rv0951"/>
<dbReference type="eggNOG" id="COG0045">
    <property type="taxonomic scope" value="Bacteria"/>
</dbReference>
<dbReference type="InParanoid" id="P9WGC5"/>
<dbReference type="OrthoDB" id="9802602at2"/>
<dbReference type="PhylomeDB" id="P9WGC5"/>
<dbReference type="BioCyc" id="MetaCyc:G185E-5106-MONOMER"/>
<dbReference type="UniPathway" id="UPA00223">
    <property type="reaction ID" value="UER00999"/>
</dbReference>
<dbReference type="Proteomes" id="UP000001584">
    <property type="component" value="Chromosome"/>
</dbReference>
<dbReference type="GO" id="GO:0005829">
    <property type="term" value="C:cytosol"/>
    <property type="evidence" value="ECO:0007005"/>
    <property type="project" value="MTBBASE"/>
</dbReference>
<dbReference type="GO" id="GO:0009274">
    <property type="term" value="C:peptidoglycan-based cell wall"/>
    <property type="evidence" value="ECO:0007005"/>
    <property type="project" value="MTBBASE"/>
</dbReference>
<dbReference type="GO" id="GO:0042709">
    <property type="term" value="C:succinate-CoA ligase complex"/>
    <property type="evidence" value="ECO:0000318"/>
    <property type="project" value="GO_Central"/>
</dbReference>
<dbReference type="GO" id="GO:0005524">
    <property type="term" value="F:ATP binding"/>
    <property type="evidence" value="ECO:0007669"/>
    <property type="project" value="UniProtKB-UniRule"/>
</dbReference>
<dbReference type="GO" id="GO:0000287">
    <property type="term" value="F:magnesium ion binding"/>
    <property type="evidence" value="ECO:0007669"/>
    <property type="project" value="UniProtKB-UniRule"/>
</dbReference>
<dbReference type="GO" id="GO:0004775">
    <property type="term" value="F:succinate-CoA ligase (ADP-forming) activity"/>
    <property type="evidence" value="ECO:0000318"/>
    <property type="project" value="GO_Central"/>
</dbReference>
<dbReference type="GO" id="GO:0004776">
    <property type="term" value="F:succinate-CoA ligase (GDP-forming) activity"/>
    <property type="evidence" value="ECO:0007669"/>
    <property type="project" value="RHEA"/>
</dbReference>
<dbReference type="GO" id="GO:0006104">
    <property type="term" value="P:succinyl-CoA metabolic process"/>
    <property type="evidence" value="ECO:0000318"/>
    <property type="project" value="GO_Central"/>
</dbReference>
<dbReference type="GO" id="GO:0006099">
    <property type="term" value="P:tricarboxylic acid cycle"/>
    <property type="evidence" value="ECO:0000318"/>
    <property type="project" value="GO_Central"/>
</dbReference>
<dbReference type="FunFam" id="3.30.1490.20:FF:000014">
    <property type="entry name" value="Succinate--CoA ligase [ADP-forming] subunit beta"/>
    <property type="match status" value="1"/>
</dbReference>
<dbReference type="FunFam" id="3.30.470.20:FF:000002">
    <property type="entry name" value="Succinate--CoA ligase [ADP-forming] subunit beta"/>
    <property type="match status" value="1"/>
</dbReference>
<dbReference type="FunFam" id="3.40.50.261:FF:000007">
    <property type="entry name" value="Succinate--CoA ligase [ADP-forming] subunit beta"/>
    <property type="match status" value="1"/>
</dbReference>
<dbReference type="Gene3D" id="3.30.1490.20">
    <property type="entry name" value="ATP-grasp fold, A domain"/>
    <property type="match status" value="1"/>
</dbReference>
<dbReference type="Gene3D" id="3.30.470.20">
    <property type="entry name" value="ATP-grasp fold, B domain"/>
    <property type="match status" value="1"/>
</dbReference>
<dbReference type="Gene3D" id="3.40.50.261">
    <property type="entry name" value="Succinyl-CoA synthetase domains"/>
    <property type="match status" value="1"/>
</dbReference>
<dbReference type="HAMAP" id="MF_00558">
    <property type="entry name" value="Succ_CoA_beta"/>
    <property type="match status" value="1"/>
</dbReference>
<dbReference type="InterPro" id="IPR011761">
    <property type="entry name" value="ATP-grasp"/>
</dbReference>
<dbReference type="InterPro" id="IPR013650">
    <property type="entry name" value="ATP-grasp_succ-CoA_synth-type"/>
</dbReference>
<dbReference type="InterPro" id="IPR013815">
    <property type="entry name" value="ATP_grasp_subdomain_1"/>
</dbReference>
<dbReference type="InterPro" id="IPR017866">
    <property type="entry name" value="Succ-CoA_synthase_bsu_CS"/>
</dbReference>
<dbReference type="InterPro" id="IPR005811">
    <property type="entry name" value="SUCC_ACL_C"/>
</dbReference>
<dbReference type="InterPro" id="IPR005809">
    <property type="entry name" value="Succ_CoA_ligase-like_bsu"/>
</dbReference>
<dbReference type="InterPro" id="IPR016102">
    <property type="entry name" value="Succinyl-CoA_synth-like"/>
</dbReference>
<dbReference type="NCBIfam" id="NF001913">
    <property type="entry name" value="PRK00696.1"/>
    <property type="match status" value="1"/>
</dbReference>
<dbReference type="NCBIfam" id="TIGR01016">
    <property type="entry name" value="sucCoAbeta"/>
    <property type="match status" value="1"/>
</dbReference>
<dbReference type="PANTHER" id="PTHR11815:SF10">
    <property type="entry name" value="SUCCINATE--COA LIGASE [GDP-FORMING] SUBUNIT BETA, MITOCHONDRIAL"/>
    <property type="match status" value="1"/>
</dbReference>
<dbReference type="PANTHER" id="PTHR11815">
    <property type="entry name" value="SUCCINYL-COA SYNTHETASE BETA CHAIN"/>
    <property type="match status" value="1"/>
</dbReference>
<dbReference type="Pfam" id="PF08442">
    <property type="entry name" value="ATP-grasp_2"/>
    <property type="match status" value="1"/>
</dbReference>
<dbReference type="Pfam" id="PF00549">
    <property type="entry name" value="Ligase_CoA"/>
    <property type="match status" value="1"/>
</dbReference>
<dbReference type="PIRSF" id="PIRSF001554">
    <property type="entry name" value="SucCS_beta"/>
    <property type="match status" value="1"/>
</dbReference>
<dbReference type="SUPFAM" id="SSF56059">
    <property type="entry name" value="Glutathione synthetase ATP-binding domain-like"/>
    <property type="match status" value="1"/>
</dbReference>
<dbReference type="SUPFAM" id="SSF52210">
    <property type="entry name" value="Succinyl-CoA synthetase domains"/>
    <property type="match status" value="1"/>
</dbReference>
<dbReference type="PROSITE" id="PS50975">
    <property type="entry name" value="ATP_GRASP"/>
    <property type="match status" value="1"/>
</dbReference>
<dbReference type="PROSITE" id="PS01217">
    <property type="entry name" value="SUCCINYL_COA_LIG_3"/>
    <property type="match status" value="1"/>
</dbReference>
<sequence length="387" mass="40926">MDLFEYQAKELFAKHNVPSTPGRVTDTAEGAKAIATEIGRPVMVKAQVKIGGRGKAGGVKYAATPQDAYEHAKNILGLDIKGHIVKKLLVAEASDIAEEYYLSFLLDRANRTYLAMCSVEGGMEIEEVAATKPERLAKVPVNAVKGVDLDFARSIAEQGHLPAEVLDTAAVTIAKLWELFVAEDATLVEVNPLVRTPDHKILALDAKITLDGNADFRQPGHAEFEDRAATDPLELKAKEHDLNYVKLDGQVGIIGNGAGLVMSTLDVVAYAGEKHGGVKPANFLDIGGGASAEVMAAGLDVVLGDQQVKSVFVNVFGGITSCDAVATGIVKALGMLGDEANKPLVVRLDGNNVEEGRRILTEANHPLVTLVATMDEAADKAAELASA</sequence>
<keyword id="KW-0067">ATP-binding</keyword>
<keyword id="KW-0436">Ligase</keyword>
<keyword id="KW-0460">Magnesium</keyword>
<keyword id="KW-0479">Metal-binding</keyword>
<keyword id="KW-0547">Nucleotide-binding</keyword>
<keyword id="KW-1185">Reference proteome</keyword>
<keyword id="KW-0816">Tricarboxylic acid cycle</keyword>
<organism>
    <name type="scientific">Mycobacterium tuberculosis (strain ATCC 25618 / H37Rv)</name>
    <dbReference type="NCBI Taxonomy" id="83332"/>
    <lineage>
        <taxon>Bacteria</taxon>
        <taxon>Bacillati</taxon>
        <taxon>Actinomycetota</taxon>
        <taxon>Actinomycetes</taxon>
        <taxon>Mycobacteriales</taxon>
        <taxon>Mycobacteriaceae</taxon>
        <taxon>Mycobacterium</taxon>
        <taxon>Mycobacterium tuberculosis complex</taxon>
    </lineage>
</organism>
<gene>
    <name evidence="1" type="primary">sucC</name>
    <name type="ordered locus">Rv0951</name>
    <name type="ORF">MTCY10D7.23c</name>
</gene>
<accession>P9WGC5</accession>
<accession>L0T6W4</accession>
<accession>P71559</accession>
<comment type="function">
    <text evidence="1">Succinyl-CoA synthetase functions in the citric acid cycle (TCA), coupling the hydrolysis of succinyl-CoA to the synthesis of either ATP or GTP and thus represents the only step of substrate-level phosphorylation in the TCA. The beta subunit provides nucleotide specificity of the enzyme and binds the substrate succinate, while the binding sites for coenzyme A and phosphate are found in the alpha subunit.</text>
</comment>
<comment type="catalytic activity">
    <reaction evidence="1">
        <text>succinate + ATP + CoA = succinyl-CoA + ADP + phosphate</text>
        <dbReference type="Rhea" id="RHEA:17661"/>
        <dbReference type="ChEBI" id="CHEBI:30031"/>
        <dbReference type="ChEBI" id="CHEBI:30616"/>
        <dbReference type="ChEBI" id="CHEBI:43474"/>
        <dbReference type="ChEBI" id="CHEBI:57287"/>
        <dbReference type="ChEBI" id="CHEBI:57292"/>
        <dbReference type="ChEBI" id="CHEBI:456216"/>
        <dbReference type="EC" id="6.2.1.5"/>
    </reaction>
    <physiologicalReaction direction="right-to-left" evidence="1">
        <dbReference type="Rhea" id="RHEA:17663"/>
    </physiologicalReaction>
</comment>
<comment type="catalytic activity">
    <reaction evidence="1">
        <text>GTP + succinate + CoA = succinyl-CoA + GDP + phosphate</text>
        <dbReference type="Rhea" id="RHEA:22120"/>
        <dbReference type="ChEBI" id="CHEBI:30031"/>
        <dbReference type="ChEBI" id="CHEBI:37565"/>
        <dbReference type="ChEBI" id="CHEBI:43474"/>
        <dbReference type="ChEBI" id="CHEBI:57287"/>
        <dbReference type="ChEBI" id="CHEBI:57292"/>
        <dbReference type="ChEBI" id="CHEBI:58189"/>
    </reaction>
    <physiologicalReaction direction="right-to-left" evidence="1">
        <dbReference type="Rhea" id="RHEA:22122"/>
    </physiologicalReaction>
</comment>
<comment type="cofactor">
    <cofactor evidence="1">
        <name>Mg(2+)</name>
        <dbReference type="ChEBI" id="CHEBI:18420"/>
    </cofactor>
    <text evidence="1">Binds 1 Mg(2+) ion per subunit.</text>
</comment>
<comment type="pathway">
    <text evidence="1">Carbohydrate metabolism; tricarboxylic acid cycle; succinate from succinyl-CoA (ligase route): step 1/1.</text>
</comment>
<comment type="subunit">
    <text evidence="1">Heterotetramer of two alpha and two beta subunits.</text>
</comment>
<comment type="similarity">
    <text evidence="1">Belongs to the succinate/malate CoA ligase beta subunit family.</text>
</comment>
<evidence type="ECO:0000255" key="1">
    <source>
        <dbReference type="HAMAP-Rule" id="MF_00558"/>
    </source>
</evidence>
<proteinExistence type="evidence at protein level"/>
<protein>
    <recommendedName>
        <fullName evidence="1">Succinate--CoA ligase [ADP-forming] subunit beta</fullName>
        <ecNumber evidence="1">6.2.1.5</ecNumber>
    </recommendedName>
    <alternativeName>
        <fullName evidence="1">Succinyl-CoA synthetase subunit beta</fullName>
        <shortName evidence="1">SCS-beta</shortName>
    </alternativeName>
</protein>